<organism>
    <name type="scientific">Geotalea uraniireducens (strain Rf4)</name>
    <name type="common">Geobacter uraniireducens</name>
    <dbReference type="NCBI Taxonomy" id="351605"/>
    <lineage>
        <taxon>Bacteria</taxon>
        <taxon>Pseudomonadati</taxon>
        <taxon>Thermodesulfobacteriota</taxon>
        <taxon>Desulfuromonadia</taxon>
        <taxon>Geobacterales</taxon>
        <taxon>Geobacteraceae</taxon>
        <taxon>Geotalea</taxon>
    </lineage>
</organism>
<feature type="chain" id="PRO_1000082922" description="Phosphatidylserine decarboxylase beta chain" evidence="1">
    <location>
        <begin position="1"/>
        <end position="181"/>
    </location>
</feature>
<feature type="chain" id="PRO_1000082923" description="Phosphatidylserine decarboxylase alpha chain" evidence="1">
    <location>
        <begin position="182"/>
        <end position="213"/>
    </location>
</feature>
<feature type="active site" description="Schiff-base intermediate with substrate; via pyruvic acid" evidence="1">
    <location>
        <position position="182"/>
    </location>
</feature>
<feature type="site" description="Cleavage (non-hydrolytic); by autocatalysis" evidence="1">
    <location>
        <begin position="181"/>
        <end position="182"/>
    </location>
</feature>
<feature type="modified residue" description="Pyruvic acid (Ser); by autocatalysis" evidence="1">
    <location>
        <position position="182"/>
    </location>
</feature>
<reference key="1">
    <citation type="submission" date="2007-05" db="EMBL/GenBank/DDBJ databases">
        <title>Complete sequence of Geobacter uraniireducens Rf4.</title>
        <authorList>
            <consortium name="US DOE Joint Genome Institute"/>
            <person name="Copeland A."/>
            <person name="Lucas S."/>
            <person name="Lapidus A."/>
            <person name="Barry K."/>
            <person name="Detter J.C."/>
            <person name="Glavina del Rio T."/>
            <person name="Hammon N."/>
            <person name="Israni S."/>
            <person name="Dalin E."/>
            <person name="Tice H."/>
            <person name="Pitluck S."/>
            <person name="Chertkov O."/>
            <person name="Brettin T."/>
            <person name="Bruce D."/>
            <person name="Han C."/>
            <person name="Schmutz J."/>
            <person name="Larimer F."/>
            <person name="Land M."/>
            <person name="Hauser L."/>
            <person name="Kyrpides N."/>
            <person name="Mikhailova N."/>
            <person name="Shelobolina E."/>
            <person name="Aklujkar M."/>
            <person name="Lovley D."/>
            <person name="Richardson P."/>
        </authorList>
    </citation>
    <scope>NUCLEOTIDE SEQUENCE [LARGE SCALE GENOMIC DNA]</scope>
    <source>
        <strain>ATCC BAA-1134 / JCM 13001 / Rf4</strain>
    </source>
</reference>
<accession>A5G7V2</accession>
<sequence>MRNKNTPIAAEGYPFVAIAGFITVVLALLAWKVLAAFFLVVTLFVVFFFRNPQRITPGDENAVVSPADGVVIYLGNARESHLDEEMMKISIFMSVFNVHINRVPVSGRVVDRFYLPGKFLDVRDERATFENEQNGLVLETARGVKMVVVQVAGLIARRIVCYPKIGDMLQRGQRYGLIRFGSRLDVYLPKNVELRVSMGDKTVAGETILGILP</sequence>
<keyword id="KW-1003">Cell membrane</keyword>
<keyword id="KW-0210">Decarboxylase</keyword>
<keyword id="KW-0444">Lipid biosynthesis</keyword>
<keyword id="KW-0443">Lipid metabolism</keyword>
<keyword id="KW-0456">Lyase</keyword>
<keyword id="KW-0472">Membrane</keyword>
<keyword id="KW-0594">Phospholipid biosynthesis</keyword>
<keyword id="KW-1208">Phospholipid metabolism</keyword>
<keyword id="KW-0670">Pyruvate</keyword>
<keyword id="KW-1185">Reference proteome</keyword>
<keyword id="KW-0865">Zymogen</keyword>
<dbReference type="EC" id="4.1.1.65" evidence="1"/>
<dbReference type="EMBL" id="CP000698">
    <property type="protein sequence ID" value="ABQ27870.1"/>
    <property type="molecule type" value="Genomic_DNA"/>
</dbReference>
<dbReference type="RefSeq" id="WP_011940521.1">
    <property type="nucleotide sequence ID" value="NC_009483.1"/>
</dbReference>
<dbReference type="SMR" id="A5G7V2"/>
<dbReference type="STRING" id="351605.Gura_3717"/>
<dbReference type="KEGG" id="gur:Gura_3717"/>
<dbReference type="HOGENOM" id="CLU_072492_0_0_7"/>
<dbReference type="OrthoDB" id="9790893at2"/>
<dbReference type="UniPathway" id="UPA00558">
    <property type="reaction ID" value="UER00616"/>
</dbReference>
<dbReference type="Proteomes" id="UP000006695">
    <property type="component" value="Chromosome"/>
</dbReference>
<dbReference type="GO" id="GO:0005886">
    <property type="term" value="C:plasma membrane"/>
    <property type="evidence" value="ECO:0007669"/>
    <property type="project" value="UniProtKB-SubCell"/>
</dbReference>
<dbReference type="GO" id="GO:0004609">
    <property type="term" value="F:phosphatidylserine decarboxylase activity"/>
    <property type="evidence" value="ECO:0007669"/>
    <property type="project" value="UniProtKB-UniRule"/>
</dbReference>
<dbReference type="GO" id="GO:0006646">
    <property type="term" value="P:phosphatidylethanolamine biosynthetic process"/>
    <property type="evidence" value="ECO:0007669"/>
    <property type="project" value="UniProtKB-UniRule"/>
</dbReference>
<dbReference type="HAMAP" id="MF_00664">
    <property type="entry name" value="PS_decarb_PSD_A"/>
    <property type="match status" value="1"/>
</dbReference>
<dbReference type="InterPro" id="IPR003817">
    <property type="entry name" value="PS_Dcarbxylase"/>
</dbReference>
<dbReference type="InterPro" id="IPR033175">
    <property type="entry name" value="PSD-A"/>
</dbReference>
<dbReference type="NCBIfam" id="NF003678">
    <property type="entry name" value="PRK05305.1-2"/>
    <property type="match status" value="1"/>
</dbReference>
<dbReference type="NCBIfam" id="NF003685">
    <property type="entry name" value="PRK05305.2-5"/>
    <property type="match status" value="1"/>
</dbReference>
<dbReference type="PANTHER" id="PTHR35809">
    <property type="entry name" value="ARCHAETIDYLSERINE DECARBOXYLASE PROENZYME-RELATED"/>
    <property type="match status" value="1"/>
</dbReference>
<dbReference type="PANTHER" id="PTHR35809:SF1">
    <property type="entry name" value="ARCHAETIDYLSERINE DECARBOXYLASE PROENZYME-RELATED"/>
    <property type="match status" value="1"/>
</dbReference>
<dbReference type="Pfam" id="PF02666">
    <property type="entry name" value="PS_Dcarbxylase"/>
    <property type="match status" value="1"/>
</dbReference>
<name>PSD_GEOUR</name>
<comment type="function">
    <text evidence="1">Catalyzes the formation of phosphatidylethanolamine (PtdEtn) from phosphatidylserine (PtdSer).</text>
</comment>
<comment type="catalytic activity">
    <reaction evidence="1">
        <text>a 1,2-diacyl-sn-glycero-3-phospho-L-serine + H(+) = a 1,2-diacyl-sn-glycero-3-phosphoethanolamine + CO2</text>
        <dbReference type="Rhea" id="RHEA:20828"/>
        <dbReference type="ChEBI" id="CHEBI:15378"/>
        <dbReference type="ChEBI" id="CHEBI:16526"/>
        <dbReference type="ChEBI" id="CHEBI:57262"/>
        <dbReference type="ChEBI" id="CHEBI:64612"/>
        <dbReference type="EC" id="4.1.1.65"/>
    </reaction>
</comment>
<comment type="cofactor">
    <cofactor evidence="1">
        <name>pyruvate</name>
        <dbReference type="ChEBI" id="CHEBI:15361"/>
    </cofactor>
    <text evidence="1">Binds 1 pyruvoyl group covalently per subunit.</text>
</comment>
<comment type="pathway">
    <text evidence="1">Phospholipid metabolism; phosphatidylethanolamine biosynthesis; phosphatidylethanolamine from CDP-diacylglycerol: step 2/2.</text>
</comment>
<comment type="subunit">
    <text evidence="1">Heterodimer of a large membrane-associated beta subunit and a small pyruvoyl-containing alpha subunit.</text>
</comment>
<comment type="subcellular location">
    <subcellularLocation>
        <location evidence="1">Cell membrane</location>
        <topology evidence="1">Peripheral membrane protein</topology>
    </subcellularLocation>
</comment>
<comment type="PTM">
    <text evidence="1">Is synthesized initially as an inactive proenzyme. Formation of the active enzyme involves a self-maturation process in which the active site pyruvoyl group is generated from an internal serine residue via an autocatalytic post-translational modification. Two non-identical subunits are generated from the proenzyme in this reaction, and the pyruvate is formed at the N-terminus of the alpha chain, which is derived from the carboxyl end of the proenzyme. The post-translation cleavage follows an unusual pathway, termed non-hydrolytic serinolysis, in which the side chain hydroxyl group of the serine supplies its oxygen atom to form the C-terminus of the beta chain, while the remainder of the serine residue undergoes an oxidative deamination to produce ammonia and the pyruvoyl prosthetic group on the alpha chain.</text>
</comment>
<comment type="similarity">
    <text evidence="1">Belongs to the phosphatidylserine decarboxylase family. PSD-A subfamily.</text>
</comment>
<gene>
    <name evidence="1" type="primary">psd</name>
    <name type="ordered locus">Gura_3717</name>
</gene>
<protein>
    <recommendedName>
        <fullName evidence="1">Phosphatidylserine decarboxylase proenzyme</fullName>
        <ecNumber evidence="1">4.1.1.65</ecNumber>
    </recommendedName>
    <component>
        <recommendedName>
            <fullName evidence="1">Phosphatidylserine decarboxylase alpha chain</fullName>
        </recommendedName>
    </component>
    <component>
        <recommendedName>
            <fullName evidence="1">Phosphatidylserine decarboxylase beta chain</fullName>
        </recommendedName>
    </component>
</protein>
<evidence type="ECO:0000255" key="1">
    <source>
        <dbReference type="HAMAP-Rule" id="MF_00664"/>
    </source>
</evidence>
<proteinExistence type="inferred from homology"/>